<evidence type="ECO:0000250" key="1">
    <source>
        <dbReference type="UniProtKB" id="P95276"/>
    </source>
</evidence>
<evidence type="ECO:0000255" key="2"/>
<evidence type="ECO:0000269" key="3">
    <source>
    </source>
</evidence>
<evidence type="ECO:0000303" key="4">
    <source>
    </source>
</evidence>
<evidence type="ECO:0000305" key="5"/>
<evidence type="ECO:0000305" key="6">
    <source>
    </source>
</evidence>
<name>EPHB_MYCTU</name>
<accession>I6YC03</accession>
<gene>
    <name type="primary">ephB</name>
    <name type="ordered locus">Rv1938</name>
</gene>
<protein>
    <recommendedName>
        <fullName evidence="4">Epoxide hydrolase B</fullName>
        <shortName evidence="4">EHB</shortName>
        <ecNumber evidence="1">3.3.2.10</ecNumber>
    </recommendedName>
    <alternativeName>
        <fullName evidence="4">Epoxide hydrolase EphB</fullName>
    </alternativeName>
</protein>
<reference key="1">
    <citation type="journal article" date="1998" name="Nature">
        <title>Deciphering the biology of Mycobacterium tuberculosis from the complete genome sequence.</title>
        <authorList>
            <person name="Cole S.T."/>
            <person name="Brosch R."/>
            <person name="Parkhill J."/>
            <person name="Garnier T."/>
            <person name="Churcher C.M."/>
            <person name="Harris D.E."/>
            <person name="Gordon S.V."/>
            <person name="Eiglmeier K."/>
            <person name="Gas S."/>
            <person name="Barry C.E. III"/>
            <person name="Tekaia F."/>
            <person name="Badcock K."/>
            <person name="Basham D."/>
            <person name="Brown D."/>
            <person name="Chillingworth T."/>
            <person name="Connor R."/>
            <person name="Davies R.M."/>
            <person name="Devlin K."/>
            <person name="Feltwell T."/>
            <person name="Gentles S."/>
            <person name="Hamlin N."/>
            <person name="Holroyd S."/>
            <person name="Hornsby T."/>
            <person name="Jagels K."/>
            <person name="Krogh A."/>
            <person name="McLean J."/>
            <person name="Moule S."/>
            <person name="Murphy L.D."/>
            <person name="Oliver S."/>
            <person name="Osborne J."/>
            <person name="Quail M.A."/>
            <person name="Rajandream M.A."/>
            <person name="Rogers J."/>
            <person name="Rutter S."/>
            <person name="Seeger K."/>
            <person name="Skelton S."/>
            <person name="Squares S."/>
            <person name="Squares R."/>
            <person name="Sulston J.E."/>
            <person name="Taylor K."/>
            <person name="Whitehead S."/>
            <person name="Barrell B.G."/>
        </authorList>
    </citation>
    <scope>NUCLEOTIDE SEQUENCE [LARGE SCALE GENOMIC DNA]</scope>
    <source>
        <strain>ATCC 25618 / H37Rv</strain>
    </source>
</reference>
<reference key="2">
    <citation type="journal article" date="2006" name="Acta Crystallogr. F">
        <title>Cloning, expression, purification, crystallization and preliminary X-ray studies of epoxide hydrolases A and B from Mycobacterium tuberculosis.</title>
        <authorList>
            <person name="Biswal B.K."/>
            <person name="Garen G."/>
            <person name="Cherney M.M."/>
            <person name="Garen C."/>
            <person name="James M.N."/>
        </authorList>
    </citation>
    <scope>FUNCTION</scope>
</reference>
<reference key="3">
    <citation type="journal article" date="2009" name="Microbiology">
        <title>Mce3R, a TetR-type transcriptional repressor, controls the expression of a regulon involved in lipid metabolism in Mycobacterium tuberculosis.</title>
        <authorList>
            <person name="de la Paz Santangelo M."/>
            <person name="Klepp L."/>
            <person name="Nunez-Garcia J."/>
            <person name="Blanco F.C."/>
            <person name="Soria M."/>
            <person name="Garcia-Pelayo M.C."/>
            <person name="Bianco M.V."/>
            <person name="Cataldi A.A."/>
            <person name="Golby P."/>
            <person name="Jackson M."/>
            <person name="Gordon S.V."/>
            <person name="Bigi F."/>
        </authorList>
    </citation>
    <scope>INDUCTION</scope>
</reference>
<reference key="4">
    <citation type="journal article" date="2011" name="Mol. Cell. Proteomics">
        <title>Proteogenomic analysis of Mycobacterium tuberculosis by high resolution mass spectrometry.</title>
        <authorList>
            <person name="Kelkar D.S."/>
            <person name="Kumar D."/>
            <person name="Kumar P."/>
            <person name="Balakrishnan L."/>
            <person name="Muthusamy B."/>
            <person name="Yadav A.K."/>
            <person name="Shrivastava P."/>
            <person name="Marimuthu A."/>
            <person name="Anand S."/>
            <person name="Sundaram H."/>
            <person name="Kingsbury R."/>
            <person name="Harsha H.C."/>
            <person name="Nair B."/>
            <person name="Prasad T.S."/>
            <person name="Chauhan D.S."/>
            <person name="Katoch K."/>
            <person name="Katoch V.M."/>
            <person name="Kumar P."/>
            <person name="Chaerkady R."/>
            <person name="Ramachandran S."/>
            <person name="Dash D."/>
            <person name="Pandey A."/>
        </authorList>
    </citation>
    <scope>IDENTIFICATION BY MASS SPECTROMETRY [LARGE SCALE ANALYSIS]</scope>
    <source>
        <strain>ATCC 25618 / H37Rv</strain>
    </source>
</reference>
<organism>
    <name type="scientific">Mycobacterium tuberculosis (strain ATCC 25618 / H37Rv)</name>
    <dbReference type="NCBI Taxonomy" id="83332"/>
    <lineage>
        <taxon>Bacteria</taxon>
        <taxon>Bacillati</taxon>
        <taxon>Actinomycetota</taxon>
        <taxon>Actinomycetes</taxon>
        <taxon>Mycobacteriales</taxon>
        <taxon>Mycobacteriaceae</taxon>
        <taxon>Mycobacterium</taxon>
        <taxon>Mycobacterium tuberculosis complex</taxon>
    </lineage>
</organism>
<proteinExistence type="evidence at protein level"/>
<dbReference type="EC" id="3.3.2.10" evidence="1"/>
<dbReference type="EMBL" id="AL123456">
    <property type="protein sequence ID" value="CCP44705.1"/>
    <property type="molecule type" value="Genomic_DNA"/>
</dbReference>
<dbReference type="RefSeq" id="NP_216454.1">
    <property type="nucleotide sequence ID" value="NC_000962.3"/>
</dbReference>
<dbReference type="RefSeq" id="WP_003899091.1">
    <property type="nucleotide sequence ID" value="NZ_NVQJ01000034.1"/>
</dbReference>
<dbReference type="SMR" id="I6YC03"/>
<dbReference type="FunCoup" id="I6YC03">
    <property type="interactions" value="1"/>
</dbReference>
<dbReference type="IntAct" id="I6YC03">
    <property type="interactions" value="5"/>
</dbReference>
<dbReference type="MINT" id="I6YC03"/>
<dbReference type="STRING" id="83332.Rv1938"/>
<dbReference type="ESTHER" id="myctu-ephB">
    <property type="family name" value="Epoxide_hydrolase"/>
</dbReference>
<dbReference type="MEROPS" id="S33.971"/>
<dbReference type="PaxDb" id="83332-Rv1938"/>
<dbReference type="DNASU" id="885392"/>
<dbReference type="GeneID" id="885392"/>
<dbReference type="KEGG" id="mtu:Rv1938"/>
<dbReference type="KEGG" id="mtv:RVBD_1938"/>
<dbReference type="PATRIC" id="fig|83332.111.peg.2156"/>
<dbReference type="TubercuList" id="Rv1938"/>
<dbReference type="eggNOG" id="COG0596">
    <property type="taxonomic scope" value="Bacteria"/>
</dbReference>
<dbReference type="HOGENOM" id="CLU_020336_7_2_11"/>
<dbReference type="InParanoid" id="I6YC03"/>
<dbReference type="OrthoDB" id="2987348at2"/>
<dbReference type="PhylomeDB" id="I6YC03"/>
<dbReference type="Proteomes" id="UP000001584">
    <property type="component" value="Chromosome"/>
</dbReference>
<dbReference type="GO" id="GO:0004301">
    <property type="term" value="F:epoxide hydrolase activity"/>
    <property type="evidence" value="ECO:0000250"/>
    <property type="project" value="UniProtKB"/>
</dbReference>
<dbReference type="GO" id="GO:0016787">
    <property type="term" value="F:hydrolase activity"/>
    <property type="evidence" value="ECO:0000318"/>
    <property type="project" value="GO_Central"/>
</dbReference>
<dbReference type="GO" id="GO:0042803">
    <property type="term" value="F:protein homodimerization activity"/>
    <property type="evidence" value="ECO:0000250"/>
    <property type="project" value="UniProtKB"/>
</dbReference>
<dbReference type="GO" id="GO:0009636">
    <property type="term" value="P:response to toxic substance"/>
    <property type="evidence" value="ECO:0007669"/>
    <property type="project" value="UniProtKB-KW"/>
</dbReference>
<dbReference type="FunFam" id="3.40.50.1820:FF:000417">
    <property type="entry name" value="Epoxide hydrolase B"/>
    <property type="match status" value="1"/>
</dbReference>
<dbReference type="Gene3D" id="3.40.50.1820">
    <property type="entry name" value="alpha/beta hydrolase"/>
    <property type="match status" value="1"/>
</dbReference>
<dbReference type="InterPro" id="IPR000073">
    <property type="entry name" value="AB_hydrolase_1"/>
</dbReference>
<dbReference type="InterPro" id="IPR029058">
    <property type="entry name" value="AB_hydrolase_fold"/>
</dbReference>
<dbReference type="InterPro" id="IPR000639">
    <property type="entry name" value="Epox_hydrolase-like"/>
</dbReference>
<dbReference type="PANTHER" id="PTHR43329">
    <property type="entry name" value="EPOXIDE HYDROLASE"/>
    <property type="match status" value="1"/>
</dbReference>
<dbReference type="Pfam" id="PF00561">
    <property type="entry name" value="Abhydrolase_1"/>
    <property type="match status" value="1"/>
</dbReference>
<dbReference type="PRINTS" id="PR00111">
    <property type="entry name" value="ABHYDROLASE"/>
</dbReference>
<dbReference type="PRINTS" id="PR00412">
    <property type="entry name" value="EPOXHYDRLASE"/>
</dbReference>
<dbReference type="SUPFAM" id="SSF53474">
    <property type="entry name" value="alpha/beta-Hydrolases"/>
    <property type="match status" value="1"/>
</dbReference>
<keyword id="KW-0216">Detoxification</keyword>
<keyword id="KW-0378">Hydrolase</keyword>
<keyword id="KW-1185">Reference proteome</keyword>
<feature type="chain" id="PRO_0000438586" description="Epoxide hydrolase B">
    <location>
        <begin position="1"/>
        <end position="356"/>
    </location>
</feature>
<feature type="domain" description="AB hydrolase-1" evidence="2">
    <location>
        <begin position="28"/>
        <end position="129"/>
    </location>
</feature>
<feature type="active site" description="Nucleophile" evidence="1">
    <location>
        <position position="104"/>
    </location>
</feature>
<feature type="active site" description="Proton acceptor" evidence="1">
    <location>
        <position position="333"/>
    </location>
</feature>
<feature type="site" description="Contributes to the formation of an oxyanion binding site for the epoxide oxygen of substrate" evidence="1">
    <location>
        <position position="164"/>
    </location>
</feature>
<feature type="site" description="Contributes to the formation of an oxyanion binding site for the epoxide oxygen of substrate" evidence="1">
    <location>
        <position position="272"/>
    </location>
</feature>
<feature type="site" description="Plays an orienting role for the imidazole group of His-333" evidence="1">
    <location>
        <position position="302"/>
    </location>
</feature>
<comment type="function">
    <text evidence="6">Could be involved in detoxification of extraneous host-cell epoxides. Catalyzes the hydrolysis of epoxide-containing substrates.</text>
</comment>
<comment type="catalytic activity">
    <reaction evidence="1">
        <text>an epoxide + H2O = an ethanediol</text>
        <dbReference type="Rhea" id="RHEA:19037"/>
        <dbReference type="ChEBI" id="CHEBI:15377"/>
        <dbReference type="ChEBI" id="CHEBI:32955"/>
        <dbReference type="ChEBI" id="CHEBI:140594"/>
        <dbReference type="EC" id="3.3.2.10"/>
    </reaction>
</comment>
<comment type="subunit">
    <text evidence="1">Homodimer.</text>
</comment>
<comment type="induction">
    <text evidence="3">Repressed by Mce3R.</text>
</comment>
<comment type="similarity">
    <text evidence="5">Belongs to the AB hydrolase superfamily. Epoxide hydrolase family.</text>
</comment>
<sequence>MSQVHRILNCRGTRIHAVADSPPDQQGPLVVLLHGFPESWYSWRHQIPALAGAGYRVVAIDQRGYGRSSKYRVQKAYRIKELVGDVVGVLDSYGAEQAFVVGHDWGAPVAWTFAWLHPDRCAGVVGISVPFAGRGVIGLPGSPFGERRPSDYHLELAGPGRVWYQDYFAVQDGIITEIEEDLRGWLLGLTYTVSGEGMMAATKAAVDAGVDLESMDPIDVIRAGPLCMAEGARLKDAFVYPETMPAWFTEADLDFYTGEFERSGFGGPLSFYHNIDNDWHDLADQQGKPLTPPALFIGGQYDVGTIWGAQAIERAHEVMPNYRGTHMIADVGHWIQQEAPEETNRLLLDFLGGLRP</sequence>